<keyword id="KW-0002">3D-structure</keyword>
<keyword id="KW-0963">Cytoplasm</keyword>
<keyword id="KW-0210">Decarboxylase</keyword>
<keyword id="KW-0456">Lyase</keyword>
<keyword id="KW-0627">Porphyrin biosynthesis</keyword>
<dbReference type="EC" id="4.1.1.37" evidence="1"/>
<dbReference type="EMBL" id="CP000086">
    <property type="protein sequence ID" value="ABC37811.1"/>
    <property type="molecule type" value="Genomic_DNA"/>
</dbReference>
<dbReference type="RefSeq" id="WP_009906695.1">
    <property type="nucleotide sequence ID" value="NZ_CP008785.1"/>
</dbReference>
<dbReference type="PDB" id="4EXQ">
    <property type="method" value="X-ray"/>
    <property type="resolution" value="1.65 A"/>
    <property type="chains" value="A=1-364"/>
</dbReference>
<dbReference type="PDBsum" id="4EXQ"/>
<dbReference type="SMR" id="Q2STF3"/>
<dbReference type="GeneID" id="45122973"/>
<dbReference type="KEGG" id="bte:BTH_I3304"/>
<dbReference type="HOGENOM" id="CLU_040933_0_0_4"/>
<dbReference type="UniPathway" id="UPA00251">
    <property type="reaction ID" value="UER00321"/>
</dbReference>
<dbReference type="EvolutionaryTrace" id="Q2STF3"/>
<dbReference type="Proteomes" id="UP000001930">
    <property type="component" value="Chromosome I"/>
</dbReference>
<dbReference type="GO" id="GO:0005829">
    <property type="term" value="C:cytosol"/>
    <property type="evidence" value="ECO:0007669"/>
    <property type="project" value="TreeGrafter"/>
</dbReference>
<dbReference type="GO" id="GO:0004853">
    <property type="term" value="F:uroporphyrinogen decarboxylase activity"/>
    <property type="evidence" value="ECO:0007669"/>
    <property type="project" value="UniProtKB-UniRule"/>
</dbReference>
<dbReference type="GO" id="GO:0019353">
    <property type="term" value="P:protoporphyrinogen IX biosynthetic process from glutamate"/>
    <property type="evidence" value="ECO:0007669"/>
    <property type="project" value="TreeGrafter"/>
</dbReference>
<dbReference type="CDD" id="cd00717">
    <property type="entry name" value="URO-D"/>
    <property type="match status" value="1"/>
</dbReference>
<dbReference type="FunFam" id="3.20.20.210:FF:000001">
    <property type="entry name" value="Uroporphyrinogen decarboxylase"/>
    <property type="match status" value="1"/>
</dbReference>
<dbReference type="Gene3D" id="3.20.20.210">
    <property type="match status" value="1"/>
</dbReference>
<dbReference type="HAMAP" id="MF_00218">
    <property type="entry name" value="URO_D"/>
    <property type="match status" value="1"/>
</dbReference>
<dbReference type="InterPro" id="IPR038071">
    <property type="entry name" value="UROD/MetE-like_sf"/>
</dbReference>
<dbReference type="InterPro" id="IPR006361">
    <property type="entry name" value="Uroporphyrinogen_deCO2ase_HemE"/>
</dbReference>
<dbReference type="InterPro" id="IPR000257">
    <property type="entry name" value="Uroporphyrinogen_deCOase"/>
</dbReference>
<dbReference type="NCBIfam" id="TIGR01464">
    <property type="entry name" value="hemE"/>
    <property type="match status" value="1"/>
</dbReference>
<dbReference type="PANTHER" id="PTHR21091">
    <property type="entry name" value="METHYLTETRAHYDROFOLATE:HOMOCYSTEINE METHYLTRANSFERASE RELATED"/>
    <property type="match status" value="1"/>
</dbReference>
<dbReference type="PANTHER" id="PTHR21091:SF169">
    <property type="entry name" value="UROPORPHYRINOGEN DECARBOXYLASE"/>
    <property type="match status" value="1"/>
</dbReference>
<dbReference type="Pfam" id="PF01208">
    <property type="entry name" value="URO-D"/>
    <property type="match status" value="1"/>
</dbReference>
<dbReference type="SUPFAM" id="SSF51726">
    <property type="entry name" value="UROD/MetE-like"/>
    <property type="match status" value="1"/>
</dbReference>
<dbReference type="PROSITE" id="PS00906">
    <property type="entry name" value="UROD_1"/>
    <property type="match status" value="1"/>
</dbReference>
<dbReference type="PROSITE" id="PS00907">
    <property type="entry name" value="UROD_2"/>
    <property type="match status" value="1"/>
</dbReference>
<name>DCUP_BURTA</name>
<protein>
    <recommendedName>
        <fullName evidence="1">Uroporphyrinogen decarboxylase</fullName>
        <shortName evidence="1">UPD</shortName>
        <shortName evidence="1">URO-D</shortName>
        <ecNumber evidence="1">4.1.1.37</ecNumber>
    </recommendedName>
</protein>
<reference key="1">
    <citation type="journal article" date="2005" name="BMC Genomics">
        <title>Bacterial genome adaptation to niches: divergence of the potential virulence genes in three Burkholderia species of different survival strategies.</title>
        <authorList>
            <person name="Kim H.S."/>
            <person name="Schell M.A."/>
            <person name="Yu Y."/>
            <person name="Ulrich R.L."/>
            <person name="Sarria S.H."/>
            <person name="Nierman W.C."/>
            <person name="DeShazer D."/>
        </authorList>
    </citation>
    <scope>NUCLEOTIDE SEQUENCE [LARGE SCALE GENOMIC DNA]</scope>
    <source>
        <strain>ATCC 700388 / DSM 13276 / CCUG 48851 / CIP 106301 / E264</strain>
    </source>
</reference>
<feature type="chain" id="PRO_1000023885" description="Uroporphyrinogen decarboxylase">
    <location>
        <begin position="1"/>
        <end position="364"/>
    </location>
</feature>
<feature type="binding site" evidence="1">
    <location>
        <begin position="28"/>
        <end position="32"/>
    </location>
    <ligand>
        <name>substrate</name>
    </ligand>
</feature>
<feature type="binding site" evidence="1">
    <location>
        <position position="78"/>
    </location>
    <ligand>
        <name>substrate</name>
    </ligand>
</feature>
<feature type="binding site" evidence="1">
    <location>
        <position position="160"/>
    </location>
    <ligand>
        <name>substrate</name>
    </ligand>
</feature>
<feature type="binding site" evidence="1">
    <location>
        <position position="215"/>
    </location>
    <ligand>
        <name>substrate</name>
    </ligand>
</feature>
<feature type="binding site" evidence="1">
    <location>
        <position position="333"/>
    </location>
    <ligand>
        <name>substrate</name>
    </ligand>
</feature>
<feature type="site" description="Transition state stabilizer" evidence="1">
    <location>
        <position position="78"/>
    </location>
</feature>
<feature type="strand" evidence="2">
    <location>
        <begin position="1"/>
        <end position="3"/>
    </location>
</feature>
<feature type="helix" evidence="2">
    <location>
        <begin position="9"/>
        <end position="14"/>
    </location>
</feature>
<feature type="strand" evidence="2">
    <location>
        <begin position="29"/>
        <end position="31"/>
    </location>
</feature>
<feature type="helix" evidence="2">
    <location>
        <begin position="35"/>
        <end position="44"/>
    </location>
</feature>
<feature type="helix" evidence="2">
    <location>
        <begin position="47"/>
        <end position="52"/>
    </location>
</feature>
<feature type="helix" evidence="2">
    <location>
        <begin position="54"/>
        <end position="67"/>
    </location>
</feature>
<feature type="helix" evidence="2">
    <location>
        <begin position="81"/>
        <end position="85"/>
    </location>
</feature>
<feature type="turn" evidence="2">
    <location>
        <begin position="86"/>
        <end position="88"/>
    </location>
</feature>
<feature type="strand" evidence="2">
    <location>
        <begin position="99"/>
        <end position="102"/>
    </location>
</feature>
<feature type="helix" evidence="2">
    <location>
        <begin position="107"/>
        <end position="111"/>
    </location>
</feature>
<feature type="helix" evidence="2">
    <location>
        <begin position="118"/>
        <end position="121"/>
    </location>
</feature>
<feature type="helix" evidence="2">
    <location>
        <begin position="123"/>
        <end position="135"/>
    </location>
</feature>
<feature type="strand" evidence="2">
    <location>
        <begin position="143"/>
        <end position="145"/>
    </location>
</feature>
<feature type="strand" evidence="2">
    <location>
        <begin position="147"/>
        <end position="152"/>
    </location>
</feature>
<feature type="helix" evidence="2">
    <location>
        <begin position="154"/>
        <end position="163"/>
    </location>
</feature>
<feature type="helix" evidence="2">
    <location>
        <begin position="171"/>
        <end position="179"/>
    </location>
</feature>
<feature type="helix" evidence="2">
    <location>
        <begin position="181"/>
        <end position="205"/>
    </location>
</feature>
<feature type="strand" evidence="2">
    <location>
        <begin position="208"/>
        <end position="214"/>
    </location>
</feature>
<feature type="helix" evidence="2">
    <location>
        <begin position="217"/>
        <end position="219"/>
    </location>
</feature>
<feature type="helix" evidence="2">
    <location>
        <begin position="224"/>
        <end position="228"/>
    </location>
</feature>
<feature type="helix" evidence="2">
    <location>
        <begin position="230"/>
        <end position="238"/>
    </location>
</feature>
<feature type="strand" evidence="2">
    <location>
        <begin position="251"/>
        <end position="255"/>
    </location>
</feature>
<feature type="helix" evidence="2">
    <location>
        <begin position="259"/>
        <end position="261"/>
    </location>
</feature>
<feature type="helix" evidence="2">
    <location>
        <begin position="262"/>
        <end position="266"/>
    </location>
</feature>
<feature type="strand" evidence="2">
    <location>
        <begin position="271"/>
        <end position="274"/>
    </location>
</feature>
<feature type="helix" evidence="2">
    <location>
        <begin position="281"/>
        <end position="288"/>
    </location>
</feature>
<feature type="strand" evidence="2">
    <location>
        <begin position="291"/>
        <end position="298"/>
    </location>
</feature>
<feature type="helix" evidence="2">
    <location>
        <begin position="300"/>
        <end position="304"/>
    </location>
</feature>
<feature type="helix" evidence="2">
    <location>
        <begin position="307"/>
        <end position="321"/>
    </location>
</feature>
<feature type="strand" evidence="2">
    <location>
        <begin position="327"/>
        <end position="333"/>
    </location>
</feature>
<feature type="helix" evidence="2">
    <location>
        <begin position="341"/>
        <end position="358"/>
    </location>
</feature>
<sequence length="364" mass="39497">MAQTLINDTFLRALLREPTDYTPIWLMRQAGRYLPEYNATRARAGSFLGLAKHPDYATEVTLQPLERFPLDAAILFSDILTIPDAMGLGLDFAAGEGPKFAHPVRTEADVAKLAVPDIGATLGYVTDAVREIRRALTDGEGRQRVPLIGFSGSPWTLACYMVEGGGSDDFRTVKSMAYARPDLMHRILDVNAQAVAAYLNAQIEAGAQAVMIFDTWGGALADGAYQRFSLDYIRRVVAQLKREHDGARVPAIAFTKGGGLWLEDLAATGVDAVGLDWTVNLGRARERVAGRVALQGNLDPTILFAPPEAIRAEARAVLDSYGNHPGHVFNLGHGISQFTPPEHVAELVDEVHRHSRAIRSGTGS</sequence>
<organism>
    <name type="scientific">Burkholderia thailandensis (strain ATCC 700388 / DSM 13276 / CCUG 48851 / CIP 106301 / E264)</name>
    <dbReference type="NCBI Taxonomy" id="271848"/>
    <lineage>
        <taxon>Bacteria</taxon>
        <taxon>Pseudomonadati</taxon>
        <taxon>Pseudomonadota</taxon>
        <taxon>Betaproteobacteria</taxon>
        <taxon>Burkholderiales</taxon>
        <taxon>Burkholderiaceae</taxon>
        <taxon>Burkholderia</taxon>
        <taxon>pseudomallei group</taxon>
    </lineage>
</organism>
<comment type="function">
    <text evidence="1">Catalyzes the decarboxylation of four acetate groups of uroporphyrinogen-III to yield coproporphyrinogen-III.</text>
</comment>
<comment type="catalytic activity">
    <reaction evidence="1">
        <text>uroporphyrinogen III + 4 H(+) = coproporphyrinogen III + 4 CO2</text>
        <dbReference type="Rhea" id="RHEA:19865"/>
        <dbReference type="ChEBI" id="CHEBI:15378"/>
        <dbReference type="ChEBI" id="CHEBI:16526"/>
        <dbReference type="ChEBI" id="CHEBI:57308"/>
        <dbReference type="ChEBI" id="CHEBI:57309"/>
        <dbReference type="EC" id="4.1.1.37"/>
    </reaction>
</comment>
<comment type="pathway">
    <text evidence="1">Porphyrin-containing compound metabolism; protoporphyrin-IX biosynthesis; coproporphyrinogen-III from 5-aminolevulinate: step 4/4.</text>
</comment>
<comment type="subunit">
    <text evidence="1">Homodimer.</text>
</comment>
<comment type="subcellular location">
    <subcellularLocation>
        <location evidence="1">Cytoplasm</location>
    </subcellularLocation>
</comment>
<comment type="similarity">
    <text evidence="1">Belongs to the uroporphyrinogen decarboxylase family.</text>
</comment>
<accession>Q2STF3</accession>
<evidence type="ECO:0000255" key="1">
    <source>
        <dbReference type="HAMAP-Rule" id="MF_00218"/>
    </source>
</evidence>
<evidence type="ECO:0007829" key="2">
    <source>
        <dbReference type="PDB" id="4EXQ"/>
    </source>
</evidence>
<proteinExistence type="evidence at protein level"/>
<gene>
    <name evidence="1" type="primary">hemE</name>
    <name type="ordered locus">BTH_I3304</name>
</gene>